<dbReference type="EC" id="2.3.1.46" evidence="1"/>
<dbReference type="EMBL" id="CP000247">
    <property type="protein sequence ID" value="ABG72173.1"/>
    <property type="molecule type" value="Genomic_DNA"/>
</dbReference>
<dbReference type="SMR" id="Q0TA56"/>
<dbReference type="KEGG" id="ecp:ECP_4223"/>
<dbReference type="HOGENOM" id="CLU_057851_0_1_6"/>
<dbReference type="UniPathway" id="UPA00051">
    <property type="reaction ID" value="UER00075"/>
</dbReference>
<dbReference type="Proteomes" id="UP000009182">
    <property type="component" value="Chromosome"/>
</dbReference>
<dbReference type="GO" id="GO:0005737">
    <property type="term" value="C:cytoplasm"/>
    <property type="evidence" value="ECO:0007669"/>
    <property type="project" value="UniProtKB-SubCell"/>
</dbReference>
<dbReference type="GO" id="GO:0004414">
    <property type="term" value="F:homoserine O-acetyltransferase activity"/>
    <property type="evidence" value="ECO:0007669"/>
    <property type="project" value="UniProtKB-UniRule"/>
</dbReference>
<dbReference type="GO" id="GO:0008899">
    <property type="term" value="F:homoserine O-succinyltransferase activity"/>
    <property type="evidence" value="ECO:0007669"/>
    <property type="project" value="UniProtKB-EC"/>
</dbReference>
<dbReference type="GO" id="GO:0019281">
    <property type="term" value="P:L-methionine biosynthetic process from homoserine via O-succinyl-L-homoserine and cystathionine"/>
    <property type="evidence" value="ECO:0007669"/>
    <property type="project" value="InterPro"/>
</dbReference>
<dbReference type="CDD" id="cd03131">
    <property type="entry name" value="GATase1_HTS"/>
    <property type="match status" value="1"/>
</dbReference>
<dbReference type="FunFam" id="3.40.50.880:FF:000004">
    <property type="entry name" value="Homoserine O-succinyltransferase"/>
    <property type="match status" value="1"/>
</dbReference>
<dbReference type="Gene3D" id="3.40.50.880">
    <property type="match status" value="1"/>
</dbReference>
<dbReference type="HAMAP" id="MF_00295">
    <property type="entry name" value="MetA_acyltransf"/>
    <property type="match status" value="1"/>
</dbReference>
<dbReference type="InterPro" id="IPR029062">
    <property type="entry name" value="Class_I_gatase-like"/>
</dbReference>
<dbReference type="InterPro" id="IPR005697">
    <property type="entry name" value="HST_MetA"/>
</dbReference>
<dbReference type="InterPro" id="IPR033752">
    <property type="entry name" value="MetA_family"/>
</dbReference>
<dbReference type="NCBIfam" id="TIGR01001">
    <property type="entry name" value="metA"/>
    <property type="match status" value="1"/>
</dbReference>
<dbReference type="PANTHER" id="PTHR20919">
    <property type="entry name" value="HOMOSERINE O-SUCCINYLTRANSFERASE"/>
    <property type="match status" value="1"/>
</dbReference>
<dbReference type="PANTHER" id="PTHR20919:SF0">
    <property type="entry name" value="HOMOSERINE O-SUCCINYLTRANSFERASE"/>
    <property type="match status" value="1"/>
</dbReference>
<dbReference type="Pfam" id="PF04204">
    <property type="entry name" value="HTS"/>
    <property type="match status" value="1"/>
</dbReference>
<dbReference type="PIRSF" id="PIRSF000450">
    <property type="entry name" value="H_ser_succinyltr"/>
    <property type="match status" value="1"/>
</dbReference>
<dbReference type="SUPFAM" id="SSF52317">
    <property type="entry name" value="Class I glutamine amidotransferase-like"/>
    <property type="match status" value="1"/>
</dbReference>
<sequence>MPIRVPDELPAVNFLREENVFVMTTSRASGQEIRPLKVLILNLMPKKIETENQFLRLLSNSPLQVDIQLLRIDSRESRNTPAEHLNNFYCNFEDIQEQNFDGLIVTGAPLGLVEFNDVAYWPQIKQVLEWSKDHVTSTLFVCWAVQAALNILYGIPKQTRTDKLSGVYEHHILHPHALLTRGFDDSFLAPHSRYADFPAALIRDYTDLEILAETEEGDAYLFASKDKRIAFVTGHPEYDAQTLAQEYFRDVEAGLDPDVPYNYFPHNDPQNTPRASWRSHGNLLFTNWLNYYVYQITPYDLRHMNPTLD</sequence>
<evidence type="ECO:0000255" key="1">
    <source>
        <dbReference type="HAMAP-Rule" id="MF_00295"/>
    </source>
</evidence>
<organism>
    <name type="scientific">Escherichia coli O6:K15:H31 (strain 536 / UPEC)</name>
    <dbReference type="NCBI Taxonomy" id="362663"/>
    <lineage>
        <taxon>Bacteria</taxon>
        <taxon>Pseudomonadati</taxon>
        <taxon>Pseudomonadota</taxon>
        <taxon>Gammaproteobacteria</taxon>
        <taxon>Enterobacterales</taxon>
        <taxon>Enterobacteriaceae</taxon>
        <taxon>Escherichia</taxon>
    </lineage>
</organism>
<protein>
    <recommendedName>
        <fullName evidence="1">Homoserine O-succinyltransferase</fullName>
        <shortName evidence="1">HST</shortName>
        <ecNumber evidence="1">2.3.1.46</ecNumber>
    </recommendedName>
    <alternativeName>
        <fullName evidence="1">Homoserine transsuccinylase</fullName>
        <shortName evidence="1">HTS</shortName>
    </alternativeName>
</protein>
<accession>Q0TA56</accession>
<name>METAS_ECOL5</name>
<gene>
    <name evidence="1" type="primary">metAS</name>
    <name type="ordered locus">ECP_4223</name>
</gene>
<proteinExistence type="inferred from homology"/>
<comment type="function">
    <text evidence="1">Transfers a succinyl group from succinyl-CoA to L-homoserine, forming succinyl-L-homoserine.</text>
</comment>
<comment type="catalytic activity">
    <reaction evidence="1">
        <text>L-homoserine + succinyl-CoA = O-succinyl-L-homoserine + CoA</text>
        <dbReference type="Rhea" id="RHEA:22008"/>
        <dbReference type="ChEBI" id="CHEBI:57287"/>
        <dbReference type="ChEBI" id="CHEBI:57292"/>
        <dbReference type="ChEBI" id="CHEBI:57476"/>
        <dbReference type="ChEBI" id="CHEBI:57661"/>
        <dbReference type="EC" id="2.3.1.46"/>
    </reaction>
</comment>
<comment type="pathway">
    <text evidence="1">Amino-acid biosynthesis; L-methionine biosynthesis via de novo pathway; O-succinyl-L-homoserine from L-homoserine: step 1/1.</text>
</comment>
<comment type="subunit">
    <text evidence="1">Homodimer.</text>
</comment>
<comment type="subcellular location">
    <subcellularLocation>
        <location evidence="1">Cytoplasm</location>
    </subcellularLocation>
</comment>
<comment type="similarity">
    <text evidence="1">Belongs to the MetA family.</text>
</comment>
<keyword id="KW-0012">Acyltransferase</keyword>
<keyword id="KW-0028">Amino-acid biosynthesis</keyword>
<keyword id="KW-0963">Cytoplasm</keyword>
<keyword id="KW-0486">Methionine biosynthesis</keyword>
<keyword id="KW-0808">Transferase</keyword>
<reference key="1">
    <citation type="journal article" date="2006" name="Mol. Microbiol.">
        <title>Role of pathogenicity island-associated integrases in the genome plasticity of uropathogenic Escherichia coli strain 536.</title>
        <authorList>
            <person name="Hochhut B."/>
            <person name="Wilde C."/>
            <person name="Balling G."/>
            <person name="Middendorf B."/>
            <person name="Dobrindt U."/>
            <person name="Brzuszkiewicz E."/>
            <person name="Gottschalk G."/>
            <person name="Carniel E."/>
            <person name="Hacker J."/>
        </authorList>
    </citation>
    <scope>NUCLEOTIDE SEQUENCE [LARGE SCALE GENOMIC DNA]</scope>
    <source>
        <strain>536 / UPEC</strain>
    </source>
</reference>
<feature type="chain" id="PRO_1000021812" description="Homoserine O-succinyltransferase">
    <location>
        <begin position="1"/>
        <end position="309"/>
    </location>
</feature>
<feature type="active site" description="Acyl-thioester intermediate" evidence="1">
    <location>
        <position position="142"/>
    </location>
</feature>
<feature type="active site" description="Proton acceptor" evidence="1">
    <location>
        <position position="235"/>
    </location>
</feature>
<feature type="active site" evidence="1">
    <location>
        <position position="237"/>
    </location>
</feature>
<feature type="binding site" evidence="1">
    <location>
        <position position="163"/>
    </location>
    <ligand>
        <name>substrate</name>
    </ligand>
</feature>
<feature type="binding site" evidence="1">
    <location>
        <position position="192"/>
    </location>
    <ligand>
        <name>substrate</name>
    </ligand>
</feature>
<feature type="binding site" evidence="1">
    <location>
        <position position="249"/>
    </location>
    <ligand>
        <name>substrate</name>
    </ligand>
</feature>
<feature type="site" description="Important for acyl-CoA specificity" evidence="1">
    <location>
        <position position="111"/>
    </location>
</feature>
<feature type="site" description="Important for substrate specificity" evidence="1">
    <location>
        <position position="192"/>
    </location>
</feature>